<feature type="chain" id="PRO_0000241190" description="Aspartyl/glutamyl-tRNA(Asn/Gln) amidotransferase subunit B">
    <location>
        <begin position="1"/>
        <end position="493"/>
    </location>
</feature>
<evidence type="ECO:0000255" key="1">
    <source>
        <dbReference type="HAMAP-Rule" id="MF_00121"/>
    </source>
</evidence>
<protein>
    <recommendedName>
        <fullName evidence="1">Aspartyl/glutamyl-tRNA(Asn/Gln) amidotransferase subunit B</fullName>
        <shortName evidence="1">Asp/Glu-ADT subunit B</shortName>
        <ecNumber evidence="1">6.3.5.-</ecNumber>
    </recommendedName>
</protein>
<gene>
    <name evidence="1" type="primary">gatB</name>
    <name type="ordered locus">AZOSEA17070</name>
    <name type="ORF">ebA3029</name>
</gene>
<keyword id="KW-0067">ATP-binding</keyword>
<keyword id="KW-0436">Ligase</keyword>
<keyword id="KW-0547">Nucleotide-binding</keyword>
<keyword id="KW-0648">Protein biosynthesis</keyword>
<keyword id="KW-1185">Reference proteome</keyword>
<reference key="1">
    <citation type="journal article" date="2005" name="Arch. Microbiol.">
        <title>The genome sequence of an anaerobic aromatic-degrading denitrifying bacterium, strain EbN1.</title>
        <authorList>
            <person name="Rabus R."/>
            <person name="Kube M."/>
            <person name="Heider J."/>
            <person name="Beck A."/>
            <person name="Heitmann K."/>
            <person name="Widdel F."/>
            <person name="Reinhardt R."/>
        </authorList>
    </citation>
    <scope>NUCLEOTIDE SEQUENCE [LARGE SCALE GENOMIC DNA]</scope>
    <source>
        <strain>DSM 19018 / LMG 30748 / EbN1</strain>
    </source>
</reference>
<organism>
    <name type="scientific">Aromatoleum aromaticum (strain DSM 19018 / LMG 30748 / EbN1)</name>
    <name type="common">Azoarcus sp. (strain EbN1)</name>
    <dbReference type="NCBI Taxonomy" id="76114"/>
    <lineage>
        <taxon>Bacteria</taxon>
        <taxon>Pseudomonadati</taxon>
        <taxon>Pseudomonadota</taxon>
        <taxon>Betaproteobacteria</taxon>
        <taxon>Rhodocyclales</taxon>
        <taxon>Rhodocyclaceae</taxon>
        <taxon>Aromatoleum</taxon>
    </lineage>
</organism>
<name>GATB_AROAE</name>
<dbReference type="EC" id="6.3.5.-" evidence="1"/>
<dbReference type="EMBL" id="CR555306">
    <property type="protein sequence ID" value="CAI07832.1"/>
    <property type="molecule type" value="Genomic_DNA"/>
</dbReference>
<dbReference type="RefSeq" id="WP_011237546.1">
    <property type="nucleotide sequence ID" value="NC_006513.1"/>
</dbReference>
<dbReference type="SMR" id="Q5P4D1"/>
<dbReference type="STRING" id="76114.ebA3029"/>
<dbReference type="KEGG" id="eba:ebA3029"/>
<dbReference type="eggNOG" id="COG0064">
    <property type="taxonomic scope" value="Bacteria"/>
</dbReference>
<dbReference type="HOGENOM" id="CLU_019240_0_0_4"/>
<dbReference type="OrthoDB" id="9804078at2"/>
<dbReference type="Proteomes" id="UP000006552">
    <property type="component" value="Chromosome"/>
</dbReference>
<dbReference type="GO" id="GO:0050566">
    <property type="term" value="F:asparaginyl-tRNA synthase (glutamine-hydrolyzing) activity"/>
    <property type="evidence" value="ECO:0007669"/>
    <property type="project" value="RHEA"/>
</dbReference>
<dbReference type="GO" id="GO:0005524">
    <property type="term" value="F:ATP binding"/>
    <property type="evidence" value="ECO:0007669"/>
    <property type="project" value="UniProtKB-KW"/>
</dbReference>
<dbReference type="GO" id="GO:0050567">
    <property type="term" value="F:glutaminyl-tRNA synthase (glutamine-hydrolyzing) activity"/>
    <property type="evidence" value="ECO:0007669"/>
    <property type="project" value="UniProtKB-UniRule"/>
</dbReference>
<dbReference type="GO" id="GO:0070681">
    <property type="term" value="P:glutaminyl-tRNAGln biosynthesis via transamidation"/>
    <property type="evidence" value="ECO:0007669"/>
    <property type="project" value="TreeGrafter"/>
</dbReference>
<dbReference type="GO" id="GO:0006412">
    <property type="term" value="P:translation"/>
    <property type="evidence" value="ECO:0007669"/>
    <property type="project" value="UniProtKB-UniRule"/>
</dbReference>
<dbReference type="FunFam" id="1.10.10.410:FF:000001">
    <property type="entry name" value="Aspartyl/glutamyl-tRNA(Asn/Gln) amidotransferase subunit B"/>
    <property type="match status" value="1"/>
</dbReference>
<dbReference type="Gene3D" id="1.10.10.410">
    <property type="match status" value="1"/>
</dbReference>
<dbReference type="HAMAP" id="MF_00121">
    <property type="entry name" value="GatB"/>
    <property type="match status" value="1"/>
</dbReference>
<dbReference type="InterPro" id="IPR017959">
    <property type="entry name" value="Asn/Gln-tRNA_amidoTrfase_suB/E"/>
</dbReference>
<dbReference type="InterPro" id="IPR006075">
    <property type="entry name" value="Asn/Gln-tRNA_Trfase_suB/E_cat"/>
</dbReference>
<dbReference type="InterPro" id="IPR018027">
    <property type="entry name" value="Asn/Gln_amidotransferase"/>
</dbReference>
<dbReference type="InterPro" id="IPR003789">
    <property type="entry name" value="Asn/Gln_tRNA_amidoTrase-B-like"/>
</dbReference>
<dbReference type="InterPro" id="IPR004413">
    <property type="entry name" value="GatB"/>
</dbReference>
<dbReference type="InterPro" id="IPR023168">
    <property type="entry name" value="GatB_Yqey_C_2"/>
</dbReference>
<dbReference type="InterPro" id="IPR017958">
    <property type="entry name" value="Gln-tRNA_amidoTrfase_suB_CS"/>
</dbReference>
<dbReference type="InterPro" id="IPR014746">
    <property type="entry name" value="Gln_synth/guanido_kin_cat_dom"/>
</dbReference>
<dbReference type="NCBIfam" id="TIGR00133">
    <property type="entry name" value="gatB"/>
    <property type="match status" value="1"/>
</dbReference>
<dbReference type="NCBIfam" id="NF004012">
    <property type="entry name" value="PRK05477.1-2"/>
    <property type="match status" value="1"/>
</dbReference>
<dbReference type="NCBIfam" id="NF004014">
    <property type="entry name" value="PRK05477.1-4"/>
    <property type="match status" value="1"/>
</dbReference>
<dbReference type="NCBIfam" id="NF004015">
    <property type="entry name" value="PRK05477.1-5"/>
    <property type="match status" value="1"/>
</dbReference>
<dbReference type="PANTHER" id="PTHR11659">
    <property type="entry name" value="GLUTAMYL-TRNA GLN AMIDOTRANSFERASE SUBUNIT B MITOCHONDRIAL AND PROKARYOTIC PET112-RELATED"/>
    <property type="match status" value="1"/>
</dbReference>
<dbReference type="PANTHER" id="PTHR11659:SF0">
    <property type="entry name" value="GLUTAMYL-TRNA(GLN) AMIDOTRANSFERASE SUBUNIT B, MITOCHONDRIAL"/>
    <property type="match status" value="1"/>
</dbReference>
<dbReference type="Pfam" id="PF02934">
    <property type="entry name" value="GatB_N"/>
    <property type="match status" value="1"/>
</dbReference>
<dbReference type="Pfam" id="PF02637">
    <property type="entry name" value="GatB_Yqey"/>
    <property type="match status" value="1"/>
</dbReference>
<dbReference type="SMART" id="SM00845">
    <property type="entry name" value="GatB_Yqey"/>
    <property type="match status" value="1"/>
</dbReference>
<dbReference type="SUPFAM" id="SSF89095">
    <property type="entry name" value="GatB/YqeY motif"/>
    <property type="match status" value="1"/>
</dbReference>
<dbReference type="SUPFAM" id="SSF55931">
    <property type="entry name" value="Glutamine synthetase/guanido kinase"/>
    <property type="match status" value="1"/>
</dbReference>
<dbReference type="PROSITE" id="PS01234">
    <property type="entry name" value="GATB"/>
    <property type="match status" value="1"/>
</dbReference>
<proteinExistence type="inferred from homology"/>
<comment type="function">
    <text evidence="1">Allows the formation of correctly charged Asn-tRNA(Asn) or Gln-tRNA(Gln) through the transamidation of misacylated Asp-tRNA(Asn) or Glu-tRNA(Gln) in organisms which lack either or both of asparaginyl-tRNA or glutaminyl-tRNA synthetases. The reaction takes place in the presence of glutamine and ATP through an activated phospho-Asp-tRNA(Asn) or phospho-Glu-tRNA(Gln).</text>
</comment>
<comment type="catalytic activity">
    <reaction evidence="1">
        <text>L-glutamyl-tRNA(Gln) + L-glutamine + ATP + H2O = L-glutaminyl-tRNA(Gln) + L-glutamate + ADP + phosphate + H(+)</text>
        <dbReference type="Rhea" id="RHEA:17521"/>
        <dbReference type="Rhea" id="RHEA-COMP:9681"/>
        <dbReference type="Rhea" id="RHEA-COMP:9684"/>
        <dbReference type="ChEBI" id="CHEBI:15377"/>
        <dbReference type="ChEBI" id="CHEBI:15378"/>
        <dbReference type="ChEBI" id="CHEBI:29985"/>
        <dbReference type="ChEBI" id="CHEBI:30616"/>
        <dbReference type="ChEBI" id="CHEBI:43474"/>
        <dbReference type="ChEBI" id="CHEBI:58359"/>
        <dbReference type="ChEBI" id="CHEBI:78520"/>
        <dbReference type="ChEBI" id="CHEBI:78521"/>
        <dbReference type="ChEBI" id="CHEBI:456216"/>
    </reaction>
</comment>
<comment type="catalytic activity">
    <reaction evidence="1">
        <text>L-aspartyl-tRNA(Asn) + L-glutamine + ATP + H2O = L-asparaginyl-tRNA(Asn) + L-glutamate + ADP + phosphate + 2 H(+)</text>
        <dbReference type="Rhea" id="RHEA:14513"/>
        <dbReference type="Rhea" id="RHEA-COMP:9674"/>
        <dbReference type="Rhea" id="RHEA-COMP:9677"/>
        <dbReference type="ChEBI" id="CHEBI:15377"/>
        <dbReference type="ChEBI" id="CHEBI:15378"/>
        <dbReference type="ChEBI" id="CHEBI:29985"/>
        <dbReference type="ChEBI" id="CHEBI:30616"/>
        <dbReference type="ChEBI" id="CHEBI:43474"/>
        <dbReference type="ChEBI" id="CHEBI:58359"/>
        <dbReference type="ChEBI" id="CHEBI:78515"/>
        <dbReference type="ChEBI" id="CHEBI:78516"/>
        <dbReference type="ChEBI" id="CHEBI:456216"/>
    </reaction>
</comment>
<comment type="subunit">
    <text evidence="1">Heterotrimer of A, B and C subunits.</text>
</comment>
<comment type="similarity">
    <text evidence="1">Belongs to the GatB/GatE family. GatB subfamily.</text>
</comment>
<accession>Q5P4D1</accession>
<sequence length="493" mass="53422">MSRNDWEVVIGLEVHAQLNTASKIFSAASTAFGAEPNVQASAVDIALPGVLPVLNGGAVERAIRFGVAIGATVAPKSVFARKNYFYPDLPKGYQISQFELPVVQGGAITIRVGDGDKAYEKTVQLTRAHLEEDAGKSLHEDFHGMSGIDLNRAGTPLLEIVSEPDMRSSAEAVAYARALHALVRWIDICDGNMQEGSFRCDANVSVRRPGGPLGTRREIKNLNSFRFLQQAIDFEVQWQIGTIEDGGRIQQATVLFDPDTGETRMMRSKEDAHDYRYFPDPDLLPLVIPSEWIARVRSEMPELPGAMKARFINDYGLSAYDAASLTAAKEIAAYYQAMLATADTKPGSQVPKLGANWVMGELAAQLNRAERDIGDSPVTPAQLAGLVQRIADGTISNNIARKVFAALWNGEGGSGADAADRIIEAQGLRQVNDSSALEPLIDEVLAANRKSVDEFRAGKEKAFNALVGQVMKASRGKANPAQVNEMLKRKLDA</sequence>